<sequence>MANPVTEIDVDLNTQEVLLAASQHDTAKLRRLLRANDAAGNPANVKDPETGYSPLHAAIAACEPDEEEDVKSNGVQTNGDRQTHGQESTVEAAVQTVKLLLQEGAIWNDLDLNNETPGCIARRLGLTELYDMVVDAGVRAELLLNRLDGYEQLSDEEMEEDGEQEQEQQDAAVAADASITNTAEDESVPQLVDTTAAAPPQTADAEPSVTSSRYLNSDLTFQQDRLLDQDQNGVMMAWESDIMAKSAKQLLPTPGLRVLNVGHGMGIVDGFIQEQSPSAHHIIEAHPAVVAEMKRKGWHEKPGVVIHEGKWQDILPGLVAEGVMFDAIYYDTFAESYADFREFFTEQVIGVLEQEGKWSFFNGMGADRQISYDVYQKVVEMDLFEAGFDVEWEEIDVPKLEGEWNGVRRPYWSIDKYRLPLCKYMD</sequence>
<gene>
    <name evidence="1" type="primary">rmt2</name>
    <name type="ORF">AN6072</name>
</gene>
<accession>Q5B058</accession>
<accession>C8V2T0</accession>
<feature type="chain" id="PRO_0000228975" description="Protein arginine N-methyltransferase 2">
    <location>
        <begin position="1"/>
        <end position="426"/>
    </location>
</feature>
<feature type="domain" description="RMT2" evidence="2">
    <location>
        <begin position="207"/>
        <end position="426"/>
    </location>
</feature>
<feature type="region of interest" description="Disordered" evidence="3">
    <location>
        <begin position="65"/>
        <end position="88"/>
    </location>
</feature>
<feature type="region of interest" description="Disordered" evidence="3">
    <location>
        <begin position="155"/>
        <end position="175"/>
    </location>
</feature>
<feature type="compositionally biased region" description="Polar residues" evidence="3">
    <location>
        <begin position="73"/>
        <end position="88"/>
    </location>
</feature>
<feature type="compositionally biased region" description="Acidic residues" evidence="3">
    <location>
        <begin position="155"/>
        <end position="168"/>
    </location>
</feature>
<feature type="binding site" evidence="2">
    <location>
        <position position="214"/>
    </location>
    <ligand>
        <name>S-adenosyl-L-methionine</name>
        <dbReference type="ChEBI" id="CHEBI:59789"/>
    </ligand>
</feature>
<feature type="binding site" evidence="2">
    <location>
        <position position="243"/>
    </location>
    <ligand>
        <name>S-adenosyl-L-methionine</name>
        <dbReference type="ChEBI" id="CHEBI:59789"/>
    </ligand>
</feature>
<feature type="binding site" evidence="2">
    <location>
        <begin position="263"/>
        <end position="268"/>
    </location>
    <ligand>
        <name>S-adenosyl-L-methionine</name>
        <dbReference type="ChEBI" id="CHEBI:59789"/>
    </ligand>
</feature>
<feature type="binding site" evidence="2">
    <location>
        <begin position="284"/>
        <end position="286"/>
    </location>
    <ligand>
        <name>S-adenosyl-L-methionine</name>
        <dbReference type="ChEBI" id="CHEBI:59789"/>
    </ligand>
</feature>
<feature type="binding site" evidence="2">
    <location>
        <begin position="311"/>
        <end position="312"/>
    </location>
    <ligand>
        <name>S-adenosyl-L-methionine</name>
        <dbReference type="ChEBI" id="CHEBI:59789"/>
    </ligand>
</feature>
<feature type="binding site" evidence="2">
    <location>
        <position position="331"/>
    </location>
    <ligand>
        <name>S-adenosyl-L-methionine</name>
        <dbReference type="ChEBI" id="CHEBI:59789"/>
    </ligand>
</feature>
<dbReference type="EC" id="2.1.1.-" evidence="1"/>
<dbReference type="EMBL" id="AACD01000104">
    <property type="protein sequence ID" value="EAA58047.1"/>
    <property type="molecule type" value="Genomic_DNA"/>
</dbReference>
<dbReference type="EMBL" id="BN001301">
    <property type="protein sequence ID" value="CBF70243.1"/>
    <property type="molecule type" value="Genomic_DNA"/>
</dbReference>
<dbReference type="RefSeq" id="XP_663676.1">
    <property type="nucleotide sequence ID" value="XM_658584.1"/>
</dbReference>
<dbReference type="SMR" id="Q5B058"/>
<dbReference type="FunCoup" id="Q5B058">
    <property type="interactions" value="374"/>
</dbReference>
<dbReference type="STRING" id="227321.Q5B058"/>
<dbReference type="EnsemblFungi" id="CBF70243">
    <property type="protein sequence ID" value="CBF70243"/>
    <property type="gene ID" value="ANIA_06072"/>
</dbReference>
<dbReference type="KEGG" id="ani:ANIA_06072"/>
<dbReference type="VEuPathDB" id="FungiDB:AN6072"/>
<dbReference type="eggNOG" id="KOG1709">
    <property type="taxonomic scope" value="Eukaryota"/>
</dbReference>
<dbReference type="HOGENOM" id="CLU_033831_0_0_1"/>
<dbReference type="InParanoid" id="Q5B058"/>
<dbReference type="OMA" id="YWVVDNY"/>
<dbReference type="OrthoDB" id="19014at2759"/>
<dbReference type="Proteomes" id="UP000000560">
    <property type="component" value="Chromosome I"/>
</dbReference>
<dbReference type="GO" id="GO:0005737">
    <property type="term" value="C:cytoplasm"/>
    <property type="evidence" value="ECO:0000318"/>
    <property type="project" value="GO_Central"/>
</dbReference>
<dbReference type="GO" id="GO:0005634">
    <property type="term" value="C:nucleus"/>
    <property type="evidence" value="ECO:0000318"/>
    <property type="project" value="GO_Central"/>
</dbReference>
<dbReference type="GO" id="GO:0019702">
    <property type="term" value="F:protein arginine N5-methyltransferase activity"/>
    <property type="evidence" value="ECO:0000318"/>
    <property type="project" value="GO_Central"/>
</dbReference>
<dbReference type="GO" id="GO:0032259">
    <property type="term" value="P:methylation"/>
    <property type="evidence" value="ECO:0007669"/>
    <property type="project" value="UniProtKB-KW"/>
</dbReference>
<dbReference type="FunFam" id="1.25.40.20:FF:000394">
    <property type="entry name" value="Arginine N-methyltransferase 2"/>
    <property type="match status" value="1"/>
</dbReference>
<dbReference type="FunFam" id="3.40.50.150:FF:000135">
    <property type="entry name" value="Arginine N-methyltransferase 2"/>
    <property type="match status" value="1"/>
</dbReference>
<dbReference type="Gene3D" id="1.25.40.20">
    <property type="entry name" value="Ankyrin repeat-containing domain"/>
    <property type="match status" value="1"/>
</dbReference>
<dbReference type="Gene3D" id="3.40.50.150">
    <property type="entry name" value="Vaccinia Virus protein VP39"/>
    <property type="match status" value="1"/>
</dbReference>
<dbReference type="InterPro" id="IPR036770">
    <property type="entry name" value="Ankyrin_rpt-contain_sf"/>
</dbReference>
<dbReference type="InterPro" id="IPR017408">
    <property type="entry name" value="Arginine_N-MeTrfase_2"/>
</dbReference>
<dbReference type="InterPro" id="IPR051038">
    <property type="entry name" value="RMT2/GAMT_Mtase"/>
</dbReference>
<dbReference type="InterPro" id="IPR026480">
    <property type="entry name" value="RMT2_dom"/>
</dbReference>
<dbReference type="InterPro" id="IPR029063">
    <property type="entry name" value="SAM-dependent_MTases_sf"/>
</dbReference>
<dbReference type="PANTHER" id="PTHR32379">
    <property type="entry name" value="GUANIDINOACETATE N-METHYLTRANSFERASE"/>
    <property type="match status" value="1"/>
</dbReference>
<dbReference type="PANTHER" id="PTHR32379:SF1">
    <property type="entry name" value="GUANIDINOACETATE N-METHYLTRANSFERASE"/>
    <property type="match status" value="1"/>
</dbReference>
<dbReference type="PIRSF" id="PIRSF038148">
    <property type="entry name" value="Arginine_N-mtfrase-2"/>
    <property type="match status" value="1"/>
</dbReference>
<dbReference type="SUPFAM" id="SSF48403">
    <property type="entry name" value="Ankyrin repeat"/>
    <property type="match status" value="1"/>
</dbReference>
<dbReference type="SUPFAM" id="SSF53335">
    <property type="entry name" value="S-adenosyl-L-methionine-dependent methyltransferases"/>
    <property type="match status" value="1"/>
</dbReference>
<dbReference type="PROSITE" id="PS51559">
    <property type="entry name" value="SAM_RMT2"/>
    <property type="match status" value="1"/>
</dbReference>
<name>RMT2_EMENI</name>
<proteinExistence type="inferred from homology"/>
<reference key="1">
    <citation type="journal article" date="2005" name="Nature">
        <title>Sequencing of Aspergillus nidulans and comparative analysis with A. fumigatus and A. oryzae.</title>
        <authorList>
            <person name="Galagan J.E."/>
            <person name="Calvo S.E."/>
            <person name="Cuomo C."/>
            <person name="Ma L.-J."/>
            <person name="Wortman J.R."/>
            <person name="Batzoglou S."/>
            <person name="Lee S.-I."/>
            <person name="Bastuerkmen M."/>
            <person name="Spevak C.C."/>
            <person name="Clutterbuck J."/>
            <person name="Kapitonov V."/>
            <person name="Jurka J."/>
            <person name="Scazzocchio C."/>
            <person name="Farman M.L."/>
            <person name="Butler J."/>
            <person name="Purcell S."/>
            <person name="Harris S."/>
            <person name="Braus G.H."/>
            <person name="Draht O."/>
            <person name="Busch S."/>
            <person name="D'Enfert C."/>
            <person name="Bouchier C."/>
            <person name="Goldman G.H."/>
            <person name="Bell-Pedersen D."/>
            <person name="Griffiths-Jones S."/>
            <person name="Doonan J.H."/>
            <person name="Yu J."/>
            <person name="Vienken K."/>
            <person name="Pain A."/>
            <person name="Freitag M."/>
            <person name="Selker E.U."/>
            <person name="Archer D.B."/>
            <person name="Penalva M.A."/>
            <person name="Oakley B.R."/>
            <person name="Momany M."/>
            <person name="Tanaka T."/>
            <person name="Kumagai T."/>
            <person name="Asai K."/>
            <person name="Machida M."/>
            <person name="Nierman W.C."/>
            <person name="Denning D.W."/>
            <person name="Caddick M.X."/>
            <person name="Hynes M."/>
            <person name="Paoletti M."/>
            <person name="Fischer R."/>
            <person name="Miller B.L."/>
            <person name="Dyer P.S."/>
            <person name="Sachs M.S."/>
            <person name="Osmani S.A."/>
            <person name="Birren B.W."/>
        </authorList>
    </citation>
    <scope>NUCLEOTIDE SEQUENCE [LARGE SCALE GENOMIC DNA]</scope>
    <source>
        <strain>FGSC A4 / ATCC 38163 / CBS 112.46 / NRRL 194 / M139</strain>
    </source>
</reference>
<reference key="2">
    <citation type="journal article" date="2009" name="Fungal Genet. Biol.">
        <title>The 2008 update of the Aspergillus nidulans genome annotation: a community effort.</title>
        <authorList>
            <person name="Wortman J.R."/>
            <person name="Gilsenan J.M."/>
            <person name="Joardar V."/>
            <person name="Deegan J."/>
            <person name="Clutterbuck J."/>
            <person name="Andersen M.R."/>
            <person name="Archer D."/>
            <person name="Bencina M."/>
            <person name="Braus G."/>
            <person name="Coutinho P."/>
            <person name="von Dohren H."/>
            <person name="Doonan J."/>
            <person name="Driessen A.J."/>
            <person name="Durek P."/>
            <person name="Espeso E."/>
            <person name="Fekete E."/>
            <person name="Flipphi M."/>
            <person name="Estrada C.G."/>
            <person name="Geysens S."/>
            <person name="Goldman G."/>
            <person name="de Groot P.W."/>
            <person name="Hansen K."/>
            <person name="Harris S.D."/>
            <person name="Heinekamp T."/>
            <person name="Helmstaedt K."/>
            <person name="Henrissat B."/>
            <person name="Hofmann G."/>
            <person name="Homan T."/>
            <person name="Horio T."/>
            <person name="Horiuchi H."/>
            <person name="James S."/>
            <person name="Jones M."/>
            <person name="Karaffa L."/>
            <person name="Karanyi Z."/>
            <person name="Kato M."/>
            <person name="Keller N."/>
            <person name="Kelly D.E."/>
            <person name="Kiel J.A."/>
            <person name="Kim J.M."/>
            <person name="van der Klei I.J."/>
            <person name="Klis F.M."/>
            <person name="Kovalchuk A."/>
            <person name="Krasevec N."/>
            <person name="Kubicek C.P."/>
            <person name="Liu B."/>
            <person name="Maccabe A."/>
            <person name="Meyer V."/>
            <person name="Mirabito P."/>
            <person name="Miskei M."/>
            <person name="Mos M."/>
            <person name="Mullins J."/>
            <person name="Nelson D.R."/>
            <person name="Nielsen J."/>
            <person name="Oakley B.R."/>
            <person name="Osmani S.A."/>
            <person name="Pakula T."/>
            <person name="Paszewski A."/>
            <person name="Paulsen I."/>
            <person name="Pilsyk S."/>
            <person name="Pocsi I."/>
            <person name="Punt P.J."/>
            <person name="Ram A.F."/>
            <person name="Ren Q."/>
            <person name="Robellet X."/>
            <person name="Robson G."/>
            <person name="Seiboth B."/>
            <person name="van Solingen P."/>
            <person name="Specht T."/>
            <person name="Sun J."/>
            <person name="Taheri-Talesh N."/>
            <person name="Takeshita N."/>
            <person name="Ussery D."/>
            <person name="vanKuyk P.A."/>
            <person name="Visser H."/>
            <person name="van de Vondervoort P.J."/>
            <person name="de Vries R.P."/>
            <person name="Walton J."/>
            <person name="Xiang X."/>
            <person name="Xiong Y."/>
            <person name="Zeng A.P."/>
            <person name="Brandt B.W."/>
            <person name="Cornell M.J."/>
            <person name="van den Hondel C.A."/>
            <person name="Visser J."/>
            <person name="Oliver S.G."/>
            <person name="Turner G."/>
        </authorList>
    </citation>
    <scope>GENOME REANNOTATION</scope>
    <source>
        <strain>FGSC A4 / ATCC 38163 / CBS 112.46 / NRRL 194 / M139</strain>
    </source>
</reference>
<evidence type="ECO:0000250" key="1">
    <source>
        <dbReference type="UniProtKB" id="Q03305"/>
    </source>
</evidence>
<evidence type="ECO:0000255" key="2">
    <source>
        <dbReference type="PROSITE-ProRule" id="PRU00892"/>
    </source>
</evidence>
<evidence type="ECO:0000256" key="3">
    <source>
        <dbReference type="SAM" id="MobiDB-lite"/>
    </source>
</evidence>
<protein>
    <recommendedName>
        <fullName evidence="1">Protein arginine N-methyltransferase 2</fullName>
        <ecNumber evidence="1">2.1.1.-</ecNumber>
    </recommendedName>
    <alternativeName>
        <fullName evidence="1">Protein-arginine N5-methyltransferase</fullName>
    </alternativeName>
    <alternativeName>
        <fullName evidence="1">Type IV protein arginine N-methyltransferase</fullName>
        <shortName evidence="1">Type IV PRMT</shortName>
    </alternativeName>
</protein>
<comment type="function">
    <text evidence="1">S-adenosyl-L-methionine-dependent protein-arginine N-methyltransferase that methylates the delta-nitrogen atom of arginine residues to form N5-methylarginine (type IV) in target proteins. Monomethylates ribosomal protein L12.</text>
</comment>
<comment type="subunit">
    <text evidence="1">Monomer.</text>
</comment>
<comment type="subcellular location">
    <subcellularLocation>
        <location evidence="1">Cytoplasm</location>
    </subcellularLocation>
    <subcellularLocation>
        <location evidence="1">Nucleus</location>
    </subcellularLocation>
</comment>
<comment type="similarity">
    <text evidence="2">Belongs to the class I-like SAM-binding methyltransferase superfamily. RMT2 methyltransferase family.</text>
</comment>
<organism>
    <name type="scientific">Emericella nidulans (strain FGSC A4 / ATCC 38163 / CBS 112.46 / NRRL 194 / M139)</name>
    <name type="common">Aspergillus nidulans</name>
    <dbReference type="NCBI Taxonomy" id="227321"/>
    <lineage>
        <taxon>Eukaryota</taxon>
        <taxon>Fungi</taxon>
        <taxon>Dikarya</taxon>
        <taxon>Ascomycota</taxon>
        <taxon>Pezizomycotina</taxon>
        <taxon>Eurotiomycetes</taxon>
        <taxon>Eurotiomycetidae</taxon>
        <taxon>Eurotiales</taxon>
        <taxon>Aspergillaceae</taxon>
        <taxon>Aspergillus</taxon>
        <taxon>Aspergillus subgen. Nidulantes</taxon>
    </lineage>
</organism>
<keyword id="KW-0963">Cytoplasm</keyword>
<keyword id="KW-0489">Methyltransferase</keyword>
<keyword id="KW-0539">Nucleus</keyword>
<keyword id="KW-1185">Reference proteome</keyword>
<keyword id="KW-0949">S-adenosyl-L-methionine</keyword>
<keyword id="KW-0808">Transferase</keyword>